<gene>
    <name evidence="1" type="primary">trpB</name>
    <name type="ordered locus">BCQ_1304</name>
</gene>
<proteinExistence type="inferred from homology"/>
<feature type="chain" id="PRO_1000198740" description="Tryptophan synthase beta chain">
    <location>
        <begin position="1"/>
        <end position="397"/>
    </location>
</feature>
<feature type="modified residue" description="N6-(pyridoxal phosphate)lysine" evidence="1">
    <location>
        <position position="91"/>
    </location>
</feature>
<comment type="function">
    <text evidence="1">The beta subunit is responsible for the synthesis of L-tryptophan from indole and L-serine.</text>
</comment>
<comment type="catalytic activity">
    <reaction evidence="1">
        <text>(1S,2R)-1-C-(indol-3-yl)glycerol 3-phosphate + L-serine = D-glyceraldehyde 3-phosphate + L-tryptophan + H2O</text>
        <dbReference type="Rhea" id="RHEA:10532"/>
        <dbReference type="ChEBI" id="CHEBI:15377"/>
        <dbReference type="ChEBI" id="CHEBI:33384"/>
        <dbReference type="ChEBI" id="CHEBI:57912"/>
        <dbReference type="ChEBI" id="CHEBI:58866"/>
        <dbReference type="ChEBI" id="CHEBI:59776"/>
        <dbReference type="EC" id="4.2.1.20"/>
    </reaction>
</comment>
<comment type="cofactor">
    <cofactor evidence="1">
        <name>pyridoxal 5'-phosphate</name>
        <dbReference type="ChEBI" id="CHEBI:597326"/>
    </cofactor>
</comment>
<comment type="pathway">
    <text evidence="1">Amino-acid biosynthesis; L-tryptophan biosynthesis; L-tryptophan from chorismate: step 5/5.</text>
</comment>
<comment type="subunit">
    <text evidence="1">Tetramer of two alpha and two beta chains.</text>
</comment>
<comment type="similarity">
    <text evidence="1">Belongs to the TrpB family.</text>
</comment>
<accession>B9IU38</accession>
<organism>
    <name type="scientific">Bacillus cereus (strain Q1)</name>
    <dbReference type="NCBI Taxonomy" id="361100"/>
    <lineage>
        <taxon>Bacteria</taxon>
        <taxon>Bacillati</taxon>
        <taxon>Bacillota</taxon>
        <taxon>Bacilli</taxon>
        <taxon>Bacillales</taxon>
        <taxon>Bacillaceae</taxon>
        <taxon>Bacillus</taxon>
        <taxon>Bacillus cereus group</taxon>
    </lineage>
</organism>
<sequence length="397" mass="43646">MNYAYPDEKGHYGIYGGRYVPETLMQSVLELEEAYKEAMEDEEFQKELNHYLKTYVGRETPLYFAENMTKYCGGAKIYLKREDLNHTGAHKINNTIGQALLAVRMGKKKVVAETGAGQHGVATATVCALLGLECVIFMGEEDVRRQKLNVFRMELLGAKVESVAAGSGTLKDAVNEALRYWVSHVHDTHYIMGSVLGPHPFPQIVRDFQSVIGNETKKQYEALEGKLPEAVVACIGGGSNAMGMFYPFVHDEEVALYGVEAAGKGVHTEKHAATLTKGSVGVLHGSMMYLLQNEEGQIQEAHSISAGLDYPGVGPEHSLLKDIGRVSYHSITDDEALEAFQLLTKKEGIIPALESSHAVAYALKLAPQMKKDEGLVICLSGRGDKDVESIKRYMEEV</sequence>
<keyword id="KW-0028">Amino-acid biosynthesis</keyword>
<keyword id="KW-0057">Aromatic amino acid biosynthesis</keyword>
<keyword id="KW-0456">Lyase</keyword>
<keyword id="KW-0663">Pyridoxal phosphate</keyword>
<keyword id="KW-0822">Tryptophan biosynthesis</keyword>
<name>TRPB_BACCQ</name>
<reference key="1">
    <citation type="journal article" date="2009" name="J. Bacteriol.">
        <title>Complete genome sequence of the extremophilic Bacillus cereus strain Q1 with industrial applications.</title>
        <authorList>
            <person name="Xiong Z."/>
            <person name="Jiang Y."/>
            <person name="Qi D."/>
            <person name="Lu H."/>
            <person name="Yang F."/>
            <person name="Yang J."/>
            <person name="Chen L."/>
            <person name="Sun L."/>
            <person name="Xu X."/>
            <person name="Xue Y."/>
            <person name="Zhu Y."/>
            <person name="Jin Q."/>
        </authorList>
    </citation>
    <scope>NUCLEOTIDE SEQUENCE [LARGE SCALE GENOMIC DNA]</scope>
    <source>
        <strain>Q1</strain>
    </source>
</reference>
<dbReference type="EC" id="4.2.1.20" evidence="1"/>
<dbReference type="EMBL" id="CP000227">
    <property type="protein sequence ID" value="ACM11734.1"/>
    <property type="molecule type" value="Genomic_DNA"/>
</dbReference>
<dbReference type="SMR" id="B9IU38"/>
<dbReference type="KEGG" id="bcq:BCQ_1304"/>
<dbReference type="HOGENOM" id="CLU_016734_3_1_9"/>
<dbReference type="UniPathway" id="UPA00035">
    <property type="reaction ID" value="UER00044"/>
</dbReference>
<dbReference type="Proteomes" id="UP000000441">
    <property type="component" value="Chromosome"/>
</dbReference>
<dbReference type="GO" id="GO:0005737">
    <property type="term" value="C:cytoplasm"/>
    <property type="evidence" value="ECO:0007669"/>
    <property type="project" value="TreeGrafter"/>
</dbReference>
<dbReference type="GO" id="GO:0004834">
    <property type="term" value="F:tryptophan synthase activity"/>
    <property type="evidence" value="ECO:0007669"/>
    <property type="project" value="UniProtKB-UniRule"/>
</dbReference>
<dbReference type="CDD" id="cd06446">
    <property type="entry name" value="Trp-synth_B"/>
    <property type="match status" value="1"/>
</dbReference>
<dbReference type="FunFam" id="3.40.50.1100:FF:000001">
    <property type="entry name" value="Tryptophan synthase beta chain"/>
    <property type="match status" value="1"/>
</dbReference>
<dbReference type="FunFam" id="3.40.50.1100:FF:000004">
    <property type="entry name" value="Tryptophan synthase beta chain"/>
    <property type="match status" value="1"/>
</dbReference>
<dbReference type="Gene3D" id="3.40.50.1100">
    <property type="match status" value="2"/>
</dbReference>
<dbReference type="HAMAP" id="MF_00133">
    <property type="entry name" value="Trp_synth_beta"/>
    <property type="match status" value="1"/>
</dbReference>
<dbReference type="InterPro" id="IPR006653">
    <property type="entry name" value="Trp_synth_b_CS"/>
</dbReference>
<dbReference type="InterPro" id="IPR006654">
    <property type="entry name" value="Trp_synth_beta"/>
</dbReference>
<dbReference type="InterPro" id="IPR023026">
    <property type="entry name" value="Trp_synth_beta/beta-like"/>
</dbReference>
<dbReference type="InterPro" id="IPR001926">
    <property type="entry name" value="TrpB-like_PALP"/>
</dbReference>
<dbReference type="InterPro" id="IPR036052">
    <property type="entry name" value="TrpB-like_PALP_sf"/>
</dbReference>
<dbReference type="NCBIfam" id="TIGR00263">
    <property type="entry name" value="trpB"/>
    <property type="match status" value="1"/>
</dbReference>
<dbReference type="PANTHER" id="PTHR48077:SF3">
    <property type="entry name" value="TRYPTOPHAN SYNTHASE"/>
    <property type="match status" value="1"/>
</dbReference>
<dbReference type="PANTHER" id="PTHR48077">
    <property type="entry name" value="TRYPTOPHAN SYNTHASE-RELATED"/>
    <property type="match status" value="1"/>
</dbReference>
<dbReference type="Pfam" id="PF00291">
    <property type="entry name" value="PALP"/>
    <property type="match status" value="1"/>
</dbReference>
<dbReference type="PIRSF" id="PIRSF001413">
    <property type="entry name" value="Trp_syn_beta"/>
    <property type="match status" value="1"/>
</dbReference>
<dbReference type="SUPFAM" id="SSF53686">
    <property type="entry name" value="Tryptophan synthase beta subunit-like PLP-dependent enzymes"/>
    <property type="match status" value="1"/>
</dbReference>
<dbReference type="PROSITE" id="PS00168">
    <property type="entry name" value="TRP_SYNTHASE_BETA"/>
    <property type="match status" value="1"/>
</dbReference>
<evidence type="ECO:0000255" key="1">
    <source>
        <dbReference type="HAMAP-Rule" id="MF_00133"/>
    </source>
</evidence>
<protein>
    <recommendedName>
        <fullName evidence="1">Tryptophan synthase beta chain</fullName>
        <ecNumber evidence="1">4.2.1.20</ecNumber>
    </recommendedName>
</protein>